<name>SYC_NITEC</name>
<gene>
    <name evidence="1" type="primary">cysS</name>
    <name type="ordered locus">Neut_0191</name>
</gene>
<proteinExistence type="inferred from homology"/>
<sequence length="467" mass="53101">MLKIYDTLTRSRREFIPLTPGKVKMYVCGMTVYDHCHLGHARVLVVFDSVVRWLQTLDYEVTYVRNITDIDDKIIRRALENHEPFGALTARYIQAMEEDAAALGIISPSFEPRATECIESMVTMIESLLSKGLAYVANNGDVFYDVRRFPGYGKLSGKSLDDLRAGERVEIDTNKRDPLDFVLWKAAKPDEPSWDSPWGKGRPGWHIECSAMSGHYLGERFDIHGGGQDLQFPHHENEIAQSEGVHGHPHVNYWMHNGFVRVDNEKMSKSLGNFFTVREVLARYQPEVVRFFIVRAHYRSPLNYSDAHLNDARNALERLYTALKNHAPSQAQAAEEATATIDWVNDGYAQRFMAAMNDDFNTPEAVAVLFDLASEANRTGNSHYASLLKALGGILGLLQQSPRQYLQHPAHPQNDHHSIEEIERMIQQRLQARKEKNFAQADALRQQLAEAGIILEDGPQGTTWRRQ</sequence>
<reference key="1">
    <citation type="journal article" date="2007" name="Environ. Microbiol.">
        <title>Whole-genome analysis of the ammonia-oxidizing bacterium, Nitrosomonas eutropha C91: implications for niche adaptation.</title>
        <authorList>
            <person name="Stein L.Y."/>
            <person name="Arp D.J."/>
            <person name="Berube P.M."/>
            <person name="Chain P.S."/>
            <person name="Hauser L."/>
            <person name="Jetten M.S."/>
            <person name="Klotz M.G."/>
            <person name="Larimer F.W."/>
            <person name="Norton J.M."/>
            <person name="Op den Camp H.J.M."/>
            <person name="Shin M."/>
            <person name="Wei X."/>
        </authorList>
    </citation>
    <scope>NUCLEOTIDE SEQUENCE [LARGE SCALE GENOMIC DNA]</scope>
    <source>
        <strain>DSM 101675 / C91 / Nm57</strain>
    </source>
</reference>
<protein>
    <recommendedName>
        <fullName evidence="1">Cysteine--tRNA ligase</fullName>
        <ecNumber evidence="1">6.1.1.16</ecNumber>
    </recommendedName>
    <alternativeName>
        <fullName evidence="1">Cysteinyl-tRNA synthetase</fullName>
        <shortName evidence="1">CysRS</shortName>
    </alternativeName>
</protein>
<feature type="chain" id="PRO_0000332861" description="Cysteine--tRNA ligase">
    <location>
        <begin position="1"/>
        <end position="467"/>
    </location>
</feature>
<feature type="short sequence motif" description="'HIGH' region">
    <location>
        <begin position="30"/>
        <end position="40"/>
    </location>
</feature>
<feature type="short sequence motif" description="'KMSKS' region">
    <location>
        <begin position="266"/>
        <end position="270"/>
    </location>
</feature>
<feature type="binding site" evidence="1">
    <location>
        <position position="28"/>
    </location>
    <ligand>
        <name>Zn(2+)</name>
        <dbReference type="ChEBI" id="CHEBI:29105"/>
    </ligand>
</feature>
<feature type="binding site" evidence="1">
    <location>
        <position position="209"/>
    </location>
    <ligand>
        <name>Zn(2+)</name>
        <dbReference type="ChEBI" id="CHEBI:29105"/>
    </ligand>
</feature>
<feature type="binding site" evidence="1">
    <location>
        <position position="234"/>
    </location>
    <ligand>
        <name>Zn(2+)</name>
        <dbReference type="ChEBI" id="CHEBI:29105"/>
    </ligand>
</feature>
<feature type="binding site" evidence="1">
    <location>
        <position position="238"/>
    </location>
    <ligand>
        <name>Zn(2+)</name>
        <dbReference type="ChEBI" id="CHEBI:29105"/>
    </ligand>
</feature>
<feature type="binding site" evidence="1">
    <location>
        <position position="269"/>
    </location>
    <ligand>
        <name>ATP</name>
        <dbReference type="ChEBI" id="CHEBI:30616"/>
    </ligand>
</feature>
<evidence type="ECO:0000255" key="1">
    <source>
        <dbReference type="HAMAP-Rule" id="MF_00041"/>
    </source>
</evidence>
<accession>Q0AJJ4</accession>
<organism>
    <name type="scientific">Nitrosomonas eutropha (strain DSM 101675 / C91 / Nm57)</name>
    <dbReference type="NCBI Taxonomy" id="335283"/>
    <lineage>
        <taxon>Bacteria</taxon>
        <taxon>Pseudomonadati</taxon>
        <taxon>Pseudomonadota</taxon>
        <taxon>Betaproteobacteria</taxon>
        <taxon>Nitrosomonadales</taxon>
        <taxon>Nitrosomonadaceae</taxon>
        <taxon>Nitrosomonas</taxon>
    </lineage>
</organism>
<keyword id="KW-0030">Aminoacyl-tRNA synthetase</keyword>
<keyword id="KW-0067">ATP-binding</keyword>
<keyword id="KW-0963">Cytoplasm</keyword>
<keyword id="KW-0436">Ligase</keyword>
<keyword id="KW-0479">Metal-binding</keyword>
<keyword id="KW-0547">Nucleotide-binding</keyword>
<keyword id="KW-0648">Protein biosynthesis</keyword>
<keyword id="KW-0862">Zinc</keyword>
<dbReference type="EC" id="6.1.1.16" evidence="1"/>
<dbReference type="EMBL" id="CP000450">
    <property type="protein sequence ID" value="ABI58477.1"/>
    <property type="molecule type" value="Genomic_DNA"/>
</dbReference>
<dbReference type="RefSeq" id="WP_011633322.1">
    <property type="nucleotide sequence ID" value="NC_008344.1"/>
</dbReference>
<dbReference type="SMR" id="Q0AJJ4"/>
<dbReference type="STRING" id="335283.Neut_0191"/>
<dbReference type="KEGG" id="net:Neut_0191"/>
<dbReference type="eggNOG" id="COG0215">
    <property type="taxonomic scope" value="Bacteria"/>
</dbReference>
<dbReference type="HOGENOM" id="CLU_013528_0_1_4"/>
<dbReference type="OrthoDB" id="9815130at2"/>
<dbReference type="Proteomes" id="UP000001966">
    <property type="component" value="Chromosome"/>
</dbReference>
<dbReference type="GO" id="GO:0005829">
    <property type="term" value="C:cytosol"/>
    <property type="evidence" value="ECO:0007669"/>
    <property type="project" value="TreeGrafter"/>
</dbReference>
<dbReference type="GO" id="GO:0005524">
    <property type="term" value="F:ATP binding"/>
    <property type="evidence" value="ECO:0007669"/>
    <property type="project" value="UniProtKB-UniRule"/>
</dbReference>
<dbReference type="GO" id="GO:0004817">
    <property type="term" value="F:cysteine-tRNA ligase activity"/>
    <property type="evidence" value="ECO:0007669"/>
    <property type="project" value="UniProtKB-UniRule"/>
</dbReference>
<dbReference type="GO" id="GO:0008270">
    <property type="term" value="F:zinc ion binding"/>
    <property type="evidence" value="ECO:0007669"/>
    <property type="project" value="UniProtKB-UniRule"/>
</dbReference>
<dbReference type="GO" id="GO:0006423">
    <property type="term" value="P:cysteinyl-tRNA aminoacylation"/>
    <property type="evidence" value="ECO:0007669"/>
    <property type="project" value="UniProtKB-UniRule"/>
</dbReference>
<dbReference type="CDD" id="cd07963">
    <property type="entry name" value="Anticodon_Ia_Cys"/>
    <property type="match status" value="1"/>
</dbReference>
<dbReference type="CDD" id="cd00672">
    <property type="entry name" value="CysRS_core"/>
    <property type="match status" value="1"/>
</dbReference>
<dbReference type="FunFam" id="3.40.50.620:FF:000009">
    <property type="entry name" value="Cysteine--tRNA ligase"/>
    <property type="match status" value="1"/>
</dbReference>
<dbReference type="Gene3D" id="1.20.120.1910">
    <property type="entry name" value="Cysteine-tRNA ligase, C-terminal anti-codon recognition domain"/>
    <property type="match status" value="1"/>
</dbReference>
<dbReference type="Gene3D" id="3.40.50.620">
    <property type="entry name" value="HUPs"/>
    <property type="match status" value="1"/>
</dbReference>
<dbReference type="HAMAP" id="MF_00041">
    <property type="entry name" value="Cys_tRNA_synth"/>
    <property type="match status" value="1"/>
</dbReference>
<dbReference type="InterPro" id="IPR015803">
    <property type="entry name" value="Cys-tRNA-ligase"/>
</dbReference>
<dbReference type="InterPro" id="IPR015273">
    <property type="entry name" value="Cys-tRNA-synt_Ia_DALR"/>
</dbReference>
<dbReference type="InterPro" id="IPR024909">
    <property type="entry name" value="Cys-tRNA/MSH_ligase"/>
</dbReference>
<dbReference type="InterPro" id="IPR056411">
    <property type="entry name" value="CysS_C"/>
</dbReference>
<dbReference type="InterPro" id="IPR014729">
    <property type="entry name" value="Rossmann-like_a/b/a_fold"/>
</dbReference>
<dbReference type="InterPro" id="IPR032678">
    <property type="entry name" value="tRNA-synt_1_cat_dom"/>
</dbReference>
<dbReference type="InterPro" id="IPR009080">
    <property type="entry name" value="tRNAsynth_Ia_anticodon-bd"/>
</dbReference>
<dbReference type="NCBIfam" id="TIGR00435">
    <property type="entry name" value="cysS"/>
    <property type="match status" value="1"/>
</dbReference>
<dbReference type="PANTHER" id="PTHR10890:SF3">
    <property type="entry name" value="CYSTEINE--TRNA LIGASE, CYTOPLASMIC"/>
    <property type="match status" value="1"/>
</dbReference>
<dbReference type="PANTHER" id="PTHR10890">
    <property type="entry name" value="CYSTEINYL-TRNA SYNTHETASE"/>
    <property type="match status" value="1"/>
</dbReference>
<dbReference type="Pfam" id="PF23493">
    <property type="entry name" value="CysS_C"/>
    <property type="match status" value="1"/>
</dbReference>
<dbReference type="Pfam" id="PF09190">
    <property type="entry name" value="DALR_2"/>
    <property type="match status" value="1"/>
</dbReference>
<dbReference type="Pfam" id="PF01406">
    <property type="entry name" value="tRNA-synt_1e"/>
    <property type="match status" value="1"/>
</dbReference>
<dbReference type="PRINTS" id="PR00983">
    <property type="entry name" value="TRNASYNTHCYS"/>
</dbReference>
<dbReference type="SMART" id="SM00840">
    <property type="entry name" value="DALR_2"/>
    <property type="match status" value="1"/>
</dbReference>
<dbReference type="SUPFAM" id="SSF47323">
    <property type="entry name" value="Anticodon-binding domain of a subclass of class I aminoacyl-tRNA synthetases"/>
    <property type="match status" value="1"/>
</dbReference>
<dbReference type="SUPFAM" id="SSF52374">
    <property type="entry name" value="Nucleotidylyl transferase"/>
    <property type="match status" value="1"/>
</dbReference>
<comment type="catalytic activity">
    <reaction evidence="1">
        <text>tRNA(Cys) + L-cysteine + ATP = L-cysteinyl-tRNA(Cys) + AMP + diphosphate</text>
        <dbReference type="Rhea" id="RHEA:17773"/>
        <dbReference type="Rhea" id="RHEA-COMP:9661"/>
        <dbReference type="Rhea" id="RHEA-COMP:9679"/>
        <dbReference type="ChEBI" id="CHEBI:30616"/>
        <dbReference type="ChEBI" id="CHEBI:33019"/>
        <dbReference type="ChEBI" id="CHEBI:35235"/>
        <dbReference type="ChEBI" id="CHEBI:78442"/>
        <dbReference type="ChEBI" id="CHEBI:78517"/>
        <dbReference type="ChEBI" id="CHEBI:456215"/>
        <dbReference type="EC" id="6.1.1.16"/>
    </reaction>
</comment>
<comment type="cofactor">
    <cofactor evidence="1">
        <name>Zn(2+)</name>
        <dbReference type="ChEBI" id="CHEBI:29105"/>
    </cofactor>
    <text evidence="1">Binds 1 zinc ion per subunit.</text>
</comment>
<comment type="subunit">
    <text evidence="1">Monomer.</text>
</comment>
<comment type="subcellular location">
    <subcellularLocation>
        <location evidence="1">Cytoplasm</location>
    </subcellularLocation>
</comment>
<comment type="similarity">
    <text evidence="1">Belongs to the class-I aminoacyl-tRNA synthetase family.</text>
</comment>